<dbReference type="EC" id="2.1.-.-" evidence="2"/>
<dbReference type="EMBL" id="MK539848">
    <property type="protein sequence ID" value="QBQ83708.1"/>
    <property type="molecule type" value="Genomic_DNA"/>
</dbReference>
<dbReference type="SMR" id="A0A482NB13"/>
<dbReference type="GO" id="GO:0005783">
    <property type="term" value="C:endoplasmic reticulum"/>
    <property type="evidence" value="ECO:0007669"/>
    <property type="project" value="TreeGrafter"/>
</dbReference>
<dbReference type="GO" id="GO:0016020">
    <property type="term" value="C:membrane"/>
    <property type="evidence" value="ECO:0007669"/>
    <property type="project" value="UniProtKB-SubCell"/>
</dbReference>
<dbReference type="GO" id="GO:0009975">
    <property type="term" value="F:cyclase activity"/>
    <property type="evidence" value="ECO:0000314"/>
    <property type="project" value="UniProt"/>
</dbReference>
<dbReference type="GO" id="GO:0016218">
    <property type="term" value="F:polyketide synthase activity"/>
    <property type="evidence" value="ECO:0000314"/>
    <property type="project" value="UniProt"/>
</dbReference>
<dbReference type="GO" id="GO:0003838">
    <property type="term" value="F:sterol 24-C-methyltransferase activity"/>
    <property type="evidence" value="ECO:0007669"/>
    <property type="project" value="TreeGrafter"/>
</dbReference>
<dbReference type="GO" id="GO:0006696">
    <property type="term" value="P:ergosterol biosynthetic process"/>
    <property type="evidence" value="ECO:0007669"/>
    <property type="project" value="TreeGrafter"/>
</dbReference>
<dbReference type="GO" id="GO:0140781">
    <property type="term" value="P:ilicicolin H biosynthetic process"/>
    <property type="evidence" value="ECO:0000314"/>
    <property type="project" value="GO_Central"/>
</dbReference>
<dbReference type="CDD" id="cd02440">
    <property type="entry name" value="AdoMet_MTases"/>
    <property type="match status" value="1"/>
</dbReference>
<dbReference type="Gene3D" id="3.40.50.150">
    <property type="entry name" value="Vaccinia Virus protein VP39"/>
    <property type="match status" value="1"/>
</dbReference>
<dbReference type="InterPro" id="IPR050447">
    <property type="entry name" value="Erg6_SMT_methyltransf"/>
</dbReference>
<dbReference type="InterPro" id="IPR013216">
    <property type="entry name" value="Methyltransf_11"/>
</dbReference>
<dbReference type="InterPro" id="IPR029063">
    <property type="entry name" value="SAM-dependent_MTases_sf"/>
</dbReference>
<dbReference type="PANTHER" id="PTHR44068:SF1">
    <property type="entry name" value="HYPOTHETICAL LOC100005854"/>
    <property type="match status" value="1"/>
</dbReference>
<dbReference type="PANTHER" id="PTHR44068">
    <property type="entry name" value="ZGC:194242"/>
    <property type="match status" value="1"/>
</dbReference>
<dbReference type="Pfam" id="PF08241">
    <property type="entry name" value="Methyltransf_11"/>
    <property type="match status" value="1"/>
</dbReference>
<dbReference type="SUPFAM" id="SSF53335">
    <property type="entry name" value="S-adenosyl-L-methionine-dependent methyltransferases"/>
    <property type="match status" value="1"/>
</dbReference>
<protein>
    <recommendedName>
        <fullName evidence="3">S-adenosyl-L-methionine-dependent Diels-Alderase iccD</fullName>
        <ecNumber evidence="2">2.1.-.-</ecNumber>
    </recommendedName>
    <alternativeName>
        <fullName evidence="3">C-methyltransferase iccD</fullName>
        <shortName evidence="3">C-MT iccD</shortName>
    </alternativeName>
    <alternativeName>
        <fullName evidence="3">Ilicicolin H biosynthesis cluster protein D</fullName>
    </alternativeName>
    <alternativeName>
        <fullName evidence="3">Pericyclase iccD</fullName>
    </alternativeName>
</protein>
<feature type="chain" id="PRO_0000449008" description="S-adenosyl-L-methionine-dependent Diels-Alderase iccD">
    <location>
        <begin position="1"/>
        <end position="292"/>
    </location>
</feature>
<feature type="transmembrane region" description="Helical" evidence="1">
    <location>
        <begin position="240"/>
        <end position="262"/>
    </location>
</feature>
<evidence type="ECO:0000255" key="1"/>
<evidence type="ECO:0000269" key="2">
    <source>
    </source>
</evidence>
<evidence type="ECO:0000303" key="3">
    <source>
    </source>
</evidence>
<evidence type="ECO:0000305" key="4"/>
<evidence type="ECO:0000305" key="5">
    <source>
    </source>
</evidence>
<organism>
    <name type="scientific">Talaromyces variabilis</name>
    <name type="common">Penicillium variabile</name>
    <dbReference type="NCBI Taxonomy" id="28576"/>
    <lineage>
        <taxon>Eukaryota</taxon>
        <taxon>Fungi</taxon>
        <taxon>Dikarya</taxon>
        <taxon>Ascomycota</taxon>
        <taxon>Pezizomycotina</taxon>
        <taxon>Eurotiomycetes</taxon>
        <taxon>Eurotiomycetidae</taxon>
        <taxon>Eurotiales</taxon>
        <taxon>Trichocomaceae</taxon>
        <taxon>Talaromyces</taxon>
    </lineage>
</organism>
<sequence>MASSEVFTSEEAAQRAIKTYYESQESRMGYELVFGGTQHFGYYTPGTWSPFPIDKSLRRMEEKLMGWLALPAGSRILEAGCGVGHVALYLAKHGMRVTGVDIIDHHVEQARRSAQKANLPKDQIVIEKMDFERLEAIPSASHDGAFTMQSLGHAFSAEKALAGFFRVLKPGGRFALVEVERRPNAEADKKNPRLTEQLSMINVGTGMPTNERSHDGFYKGLLEEAGFVDIESRDISDNILPVVRMFYVVLLVPYLFVRLLGIEKHFVSMLAGTAGYVGYDRWRFMVVTGRKP</sequence>
<reference key="1">
    <citation type="journal article" date="2019" name="J. Am. Chem. Soc.">
        <title>Enzyme-catalyzed inverse-electron demand Diels-Alder reaction in the biosynthesis of antifungal ilicicolin H.</title>
        <authorList>
            <person name="Zhang Z."/>
            <person name="Jamieson C.S."/>
            <person name="Zhao Y.L."/>
            <person name="Li D."/>
            <person name="Ohashi M."/>
            <person name="Houk K.N."/>
            <person name="Tang Y."/>
        </authorList>
    </citation>
    <scope>NUCLEOTIDE SEQUENCE [GENOMIC DNA]</scope>
    <scope>FUNCTION</scope>
    <scope>CATALYTIC ACTIVITY</scope>
    <scope>BIOPHYSICOCHEMICAL PROPERTIES</scope>
    <scope>PATHWAY</scope>
    <source>
        <strain>HXQ-H-1</strain>
    </source>
</reference>
<keyword id="KW-0472">Membrane</keyword>
<keyword id="KW-0808">Transferase</keyword>
<keyword id="KW-0812">Transmembrane</keyword>
<keyword id="KW-1133">Transmembrane helix</keyword>
<comment type="function">
    <text evidence="2 5">S-adenosyl-l-methionine-dependent Diels-Alderase; part of the gene cluster that mediates the biosynthesis of ilicicolin H, a 4-hydroxy-2-pyridonealkaloid that has potent and broad antifungal activities by inhibiting the mitochondrial respiration chain (PubMed:30905148). IccD catalyzes the Diels-Alder reaction that converts the acyclic 2-pyridone intermediate to 8-epi-ilicicolin H (PubMed:30905148). The biosynthesis of ilicicolin H starts with formation of the tetramic acid by the hybrid PKS-NRPS synthetase iccA with the partnering trans-enoyl reductase iccB since iccA lacks a designated enoylreductase (ER) domain. The cytochrome P450 monooxygenase iccC then catalyzes the ring expansion of the tetramate to the acyclic 2-pyridone. The pericyclase iccD further converts the acyclic 2-pyridone into 8-epi-ilicicolin H. Finally, the epimerase iccE converts 8-epi-ilicicolin H into ilicicolin H via epimerization. IccA to iccE are sufficient for ilicicolin H biosynthesis and the roles of the remaining enzymes, iccF, iccG and iccH within the pathway have still to be determined (Probable) (PubMed:30905148).</text>
</comment>
<comment type="catalytic activity">
    <reaction evidence="2">
        <text>3-[(2E,4E,8S,10E,12Z)-4,8-dimethyltetradeca-2,4,10,12-tetraenoyl]-4-hydroxy-5-(4-hydroxyphenyl)-1,2-dihydropyridin-2-one = 8-epi-ilicicolin H</text>
        <dbReference type="Rhea" id="RHEA:64556"/>
        <dbReference type="ChEBI" id="CHEBI:155888"/>
        <dbReference type="ChEBI" id="CHEBI:155889"/>
    </reaction>
    <physiologicalReaction direction="left-to-right" evidence="2">
        <dbReference type="Rhea" id="RHEA:64557"/>
    </physiologicalReaction>
</comment>
<comment type="cofactor">
    <cofactor evidence="5">
        <name>S-adenosyl-L-methionine</name>
        <dbReference type="ChEBI" id="CHEBI:59789"/>
    </cofactor>
</comment>
<comment type="biophysicochemical properties">
    <kinetics>
        <KM evidence="2">54 uM for the acyclic 2-pyridone</KM>
    </kinetics>
</comment>
<comment type="pathway">
    <text evidence="2">Mycotoxin biosynthesis.</text>
</comment>
<comment type="subcellular location">
    <subcellularLocation>
        <location evidence="1">Membrane</location>
        <topology evidence="1">Single-pass membrane protein</topology>
    </subcellularLocation>
</comment>
<comment type="similarity">
    <text evidence="4">Belongs to the class I-like SAM-binding methyltransferase superfamily. Erg6/SMT family.</text>
</comment>
<accession>A0A482NB13</accession>
<gene>
    <name evidence="3" type="primary">iccD</name>
</gene>
<proteinExistence type="evidence at protein level"/>
<name>ICCD_TALVA</name>